<name>NDHM_SYNSC</name>
<organism>
    <name type="scientific">Synechococcus sp. (strain CC9605)</name>
    <dbReference type="NCBI Taxonomy" id="110662"/>
    <lineage>
        <taxon>Bacteria</taxon>
        <taxon>Bacillati</taxon>
        <taxon>Cyanobacteriota</taxon>
        <taxon>Cyanophyceae</taxon>
        <taxon>Synechococcales</taxon>
        <taxon>Synechococcaceae</taxon>
        <taxon>Synechococcus</taxon>
    </lineage>
</organism>
<feature type="chain" id="PRO_0000352202" description="NAD(P)H-quinone oxidoreductase subunit M">
    <location>
        <begin position="1"/>
        <end position="115"/>
    </location>
</feature>
<proteinExistence type="inferred from homology"/>
<comment type="function">
    <text evidence="1">NDH-1 shuttles electrons from an unknown electron donor, via FMN and iron-sulfur (Fe-S) centers, to quinones in the respiratory and/or the photosynthetic chain. The immediate electron acceptor for the enzyme in this species is believed to be plastoquinone. Couples the redox reaction to proton translocation, and thus conserves the redox energy in a proton gradient. Cyanobacterial NDH-1 also plays a role in inorganic carbon-concentration.</text>
</comment>
<comment type="catalytic activity">
    <reaction evidence="1">
        <text>a plastoquinone + NADH + (n+1) H(+)(in) = a plastoquinol + NAD(+) + n H(+)(out)</text>
        <dbReference type="Rhea" id="RHEA:42608"/>
        <dbReference type="Rhea" id="RHEA-COMP:9561"/>
        <dbReference type="Rhea" id="RHEA-COMP:9562"/>
        <dbReference type="ChEBI" id="CHEBI:15378"/>
        <dbReference type="ChEBI" id="CHEBI:17757"/>
        <dbReference type="ChEBI" id="CHEBI:57540"/>
        <dbReference type="ChEBI" id="CHEBI:57945"/>
        <dbReference type="ChEBI" id="CHEBI:62192"/>
    </reaction>
</comment>
<comment type="catalytic activity">
    <reaction evidence="1">
        <text>a plastoquinone + NADPH + (n+1) H(+)(in) = a plastoquinol + NADP(+) + n H(+)(out)</text>
        <dbReference type="Rhea" id="RHEA:42612"/>
        <dbReference type="Rhea" id="RHEA-COMP:9561"/>
        <dbReference type="Rhea" id="RHEA-COMP:9562"/>
        <dbReference type="ChEBI" id="CHEBI:15378"/>
        <dbReference type="ChEBI" id="CHEBI:17757"/>
        <dbReference type="ChEBI" id="CHEBI:57783"/>
        <dbReference type="ChEBI" id="CHEBI:58349"/>
        <dbReference type="ChEBI" id="CHEBI:62192"/>
    </reaction>
</comment>
<comment type="subunit">
    <text evidence="1">NDH-1 can be composed of about 15 different subunits; different subcomplexes with different compositions have been identified which probably have different functions.</text>
</comment>
<comment type="subcellular location">
    <subcellularLocation>
        <location evidence="1">Cellular thylakoid membrane</location>
        <topology evidence="1">Peripheral membrane protein</topology>
        <orientation evidence="1">Cytoplasmic side</orientation>
    </subcellularLocation>
</comment>
<comment type="similarity">
    <text evidence="1">Belongs to the complex I NdhM subunit family.</text>
</comment>
<comment type="sequence caution" evidence="2">
    <conflict type="erroneous initiation">
        <sequence resource="EMBL-CDS" id="ABB36128"/>
    </conflict>
</comment>
<protein>
    <recommendedName>
        <fullName evidence="1">NAD(P)H-quinone oxidoreductase subunit M</fullName>
        <ecNumber evidence="1">7.1.1.-</ecNumber>
    </recommendedName>
    <alternativeName>
        <fullName evidence="1">NAD(P)H dehydrogenase I subunit M</fullName>
        <shortName evidence="1">NDH-1 subunit M</shortName>
        <shortName evidence="1">NDH-M</shortName>
    </alternativeName>
</protein>
<dbReference type="EC" id="7.1.1.-" evidence="1"/>
<dbReference type="EMBL" id="CP000110">
    <property type="protein sequence ID" value="ABB36128.1"/>
    <property type="status" value="ALT_INIT"/>
    <property type="molecule type" value="Genomic_DNA"/>
</dbReference>
<dbReference type="SMR" id="Q3AH04"/>
<dbReference type="STRING" id="110662.Syncc9605_2396"/>
<dbReference type="KEGG" id="syd:Syncc9605_2396"/>
<dbReference type="eggNOG" id="ENOG5031AQM">
    <property type="taxonomic scope" value="Bacteria"/>
</dbReference>
<dbReference type="HOGENOM" id="CLU_137431_0_0_3"/>
<dbReference type="GO" id="GO:0031676">
    <property type="term" value="C:plasma membrane-derived thylakoid membrane"/>
    <property type="evidence" value="ECO:0007669"/>
    <property type="project" value="UniProtKB-SubCell"/>
</dbReference>
<dbReference type="GO" id="GO:0016655">
    <property type="term" value="F:oxidoreductase activity, acting on NAD(P)H, quinone or similar compound as acceptor"/>
    <property type="evidence" value="ECO:0007669"/>
    <property type="project" value="UniProtKB-UniRule"/>
</dbReference>
<dbReference type="GO" id="GO:0048038">
    <property type="term" value="F:quinone binding"/>
    <property type="evidence" value="ECO:0007669"/>
    <property type="project" value="UniProtKB-KW"/>
</dbReference>
<dbReference type="HAMAP" id="MF_01352">
    <property type="entry name" value="NDH1_NDH1M"/>
    <property type="match status" value="1"/>
</dbReference>
<dbReference type="InterPro" id="IPR018922">
    <property type="entry name" value="NdhM"/>
</dbReference>
<dbReference type="PANTHER" id="PTHR36900">
    <property type="entry name" value="NAD(P)H-QUINONE OXIDOREDUCTASE SUBUNIT M, CHLOROPLASTIC"/>
    <property type="match status" value="1"/>
</dbReference>
<dbReference type="PANTHER" id="PTHR36900:SF1">
    <property type="entry name" value="NAD(P)H-QUINONE OXIDOREDUCTASE SUBUNIT M, CHLOROPLASTIC"/>
    <property type="match status" value="1"/>
</dbReference>
<dbReference type="Pfam" id="PF10664">
    <property type="entry name" value="NdhM"/>
    <property type="match status" value="1"/>
</dbReference>
<sequence>MADTLLKCTTRHVRLFTAALQEEDLVPSDDQLTLDLDPDNEFLWDAASLAKVQGRFKELVDAAAGGELSDYTLRRIGTDLEGFIRQLLQAGELSYNPDGRVQNFSMGLPRTPELL</sequence>
<accession>Q3AH04</accession>
<keyword id="KW-0472">Membrane</keyword>
<keyword id="KW-0520">NAD</keyword>
<keyword id="KW-0521">NADP</keyword>
<keyword id="KW-0618">Plastoquinone</keyword>
<keyword id="KW-0874">Quinone</keyword>
<keyword id="KW-0793">Thylakoid</keyword>
<keyword id="KW-1278">Translocase</keyword>
<keyword id="KW-0813">Transport</keyword>
<evidence type="ECO:0000255" key="1">
    <source>
        <dbReference type="HAMAP-Rule" id="MF_01352"/>
    </source>
</evidence>
<evidence type="ECO:0000305" key="2"/>
<gene>
    <name evidence="1" type="primary">ndhM</name>
    <name type="ordered locus">Syncc9605_2396</name>
</gene>
<reference key="1">
    <citation type="submission" date="2005-07" db="EMBL/GenBank/DDBJ databases">
        <title>Complete sequence of Synechococcus sp. CC9605.</title>
        <authorList>
            <consortium name="US DOE Joint Genome Institute"/>
            <person name="Copeland A."/>
            <person name="Lucas S."/>
            <person name="Lapidus A."/>
            <person name="Barry K."/>
            <person name="Detter J.C."/>
            <person name="Glavina T."/>
            <person name="Hammon N."/>
            <person name="Israni S."/>
            <person name="Pitluck S."/>
            <person name="Schmutz J."/>
            <person name="Martinez M."/>
            <person name="Larimer F."/>
            <person name="Land M."/>
            <person name="Kyrpides N."/>
            <person name="Ivanova N."/>
            <person name="Richardson P."/>
        </authorList>
    </citation>
    <scope>NUCLEOTIDE SEQUENCE [LARGE SCALE GENOMIC DNA]</scope>
    <source>
        <strain>CC9605</strain>
    </source>
</reference>